<proteinExistence type="inferred from homology"/>
<accession>B5XTR4</accession>
<gene>
    <name evidence="1" type="primary">glpE</name>
    <name type="ordered locus">KPK_0323</name>
</gene>
<evidence type="ECO:0000255" key="1">
    <source>
        <dbReference type="HAMAP-Rule" id="MF_01009"/>
    </source>
</evidence>
<keyword id="KW-0963">Cytoplasm</keyword>
<keyword id="KW-0808">Transferase</keyword>
<protein>
    <recommendedName>
        <fullName evidence="1">Thiosulfate sulfurtransferase GlpE</fullName>
        <ecNumber evidence="1">2.8.1.1</ecNumber>
    </recommendedName>
</protein>
<dbReference type="EC" id="2.8.1.1" evidence="1"/>
<dbReference type="EMBL" id="CP000964">
    <property type="protein sequence ID" value="ACI10450.1"/>
    <property type="molecule type" value="Genomic_DNA"/>
</dbReference>
<dbReference type="SMR" id="B5XTR4"/>
<dbReference type="KEGG" id="kpe:KPK_0323"/>
<dbReference type="HOGENOM" id="CLU_089574_14_0_6"/>
<dbReference type="Proteomes" id="UP000001734">
    <property type="component" value="Chromosome"/>
</dbReference>
<dbReference type="GO" id="GO:0005737">
    <property type="term" value="C:cytoplasm"/>
    <property type="evidence" value="ECO:0007669"/>
    <property type="project" value="UniProtKB-SubCell"/>
</dbReference>
<dbReference type="GO" id="GO:0004792">
    <property type="term" value="F:thiosulfate-cyanide sulfurtransferase activity"/>
    <property type="evidence" value="ECO:0007669"/>
    <property type="project" value="UniProtKB-UniRule"/>
</dbReference>
<dbReference type="GO" id="GO:0006071">
    <property type="term" value="P:glycerol metabolic process"/>
    <property type="evidence" value="ECO:0007669"/>
    <property type="project" value="UniProtKB-UniRule"/>
</dbReference>
<dbReference type="CDD" id="cd01444">
    <property type="entry name" value="GlpE_ST"/>
    <property type="match status" value="1"/>
</dbReference>
<dbReference type="FunFam" id="3.40.250.10:FF:000007">
    <property type="entry name" value="Thiosulfate sulfurtransferase GlpE"/>
    <property type="match status" value="1"/>
</dbReference>
<dbReference type="Gene3D" id="3.40.250.10">
    <property type="entry name" value="Rhodanese-like domain"/>
    <property type="match status" value="1"/>
</dbReference>
<dbReference type="HAMAP" id="MF_01009">
    <property type="entry name" value="Thiosulf_sulfurtr"/>
    <property type="match status" value="1"/>
</dbReference>
<dbReference type="InterPro" id="IPR050229">
    <property type="entry name" value="GlpE_sulfurtransferase"/>
</dbReference>
<dbReference type="InterPro" id="IPR001763">
    <property type="entry name" value="Rhodanese-like_dom"/>
</dbReference>
<dbReference type="InterPro" id="IPR036873">
    <property type="entry name" value="Rhodanese-like_dom_sf"/>
</dbReference>
<dbReference type="InterPro" id="IPR023695">
    <property type="entry name" value="Thiosulf_sulfurTrfase"/>
</dbReference>
<dbReference type="NCBIfam" id="NF001195">
    <property type="entry name" value="PRK00162.1"/>
    <property type="match status" value="1"/>
</dbReference>
<dbReference type="PANTHER" id="PTHR43031">
    <property type="entry name" value="FAD-DEPENDENT OXIDOREDUCTASE"/>
    <property type="match status" value="1"/>
</dbReference>
<dbReference type="PANTHER" id="PTHR43031:SF6">
    <property type="entry name" value="THIOSULFATE SULFURTRANSFERASE GLPE"/>
    <property type="match status" value="1"/>
</dbReference>
<dbReference type="Pfam" id="PF00581">
    <property type="entry name" value="Rhodanese"/>
    <property type="match status" value="1"/>
</dbReference>
<dbReference type="SMART" id="SM00450">
    <property type="entry name" value="RHOD"/>
    <property type="match status" value="1"/>
</dbReference>
<dbReference type="SUPFAM" id="SSF52821">
    <property type="entry name" value="Rhodanese/Cell cycle control phosphatase"/>
    <property type="match status" value="1"/>
</dbReference>
<dbReference type="PROSITE" id="PS50206">
    <property type="entry name" value="RHODANESE_3"/>
    <property type="match status" value="1"/>
</dbReference>
<sequence>MEQFECINVEEAHQKLHQQTAVLVDIRDPQSYAMGHTPGAFHLTNDTLGAFMRDHDFDTAVMVMCYHGNSSKGAAQYLLQQGFDKVYSVDGGFDAWHRHFPAEVAHGTF</sequence>
<comment type="function">
    <text evidence="1">Transferase that catalyzes the transfer of sulfur from thiosulfate to thiophilic acceptors such as cyanide or dithiols. May function in a CysM-independent thiosulfate assimilation pathway by catalyzing the conversion of thiosulfate to sulfite, which can then be used for L-cysteine biosynthesis.</text>
</comment>
<comment type="catalytic activity">
    <reaction evidence="1">
        <text>thiosulfate + hydrogen cyanide = thiocyanate + sulfite + 2 H(+)</text>
        <dbReference type="Rhea" id="RHEA:16881"/>
        <dbReference type="ChEBI" id="CHEBI:15378"/>
        <dbReference type="ChEBI" id="CHEBI:17359"/>
        <dbReference type="ChEBI" id="CHEBI:18022"/>
        <dbReference type="ChEBI" id="CHEBI:18407"/>
        <dbReference type="ChEBI" id="CHEBI:33542"/>
        <dbReference type="EC" id="2.8.1.1"/>
    </reaction>
</comment>
<comment type="catalytic activity">
    <reaction evidence="1">
        <text>thiosulfate + [thioredoxin]-dithiol = [thioredoxin]-disulfide + hydrogen sulfide + sulfite + 2 H(+)</text>
        <dbReference type="Rhea" id="RHEA:83859"/>
        <dbReference type="Rhea" id="RHEA-COMP:10698"/>
        <dbReference type="Rhea" id="RHEA-COMP:10700"/>
        <dbReference type="ChEBI" id="CHEBI:15378"/>
        <dbReference type="ChEBI" id="CHEBI:17359"/>
        <dbReference type="ChEBI" id="CHEBI:29919"/>
        <dbReference type="ChEBI" id="CHEBI:29950"/>
        <dbReference type="ChEBI" id="CHEBI:33542"/>
        <dbReference type="ChEBI" id="CHEBI:50058"/>
    </reaction>
</comment>
<comment type="subcellular location">
    <subcellularLocation>
        <location evidence="1">Cytoplasm</location>
    </subcellularLocation>
</comment>
<comment type="similarity">
    <text evidence="1">Belongs to the GlpE family.</text>
</comment>
<reference key="1">
    <citation type="journal article" date="2008" name="PLoS Genet.">
        <title>Complete genome sequence of the N2-fixing broad host range endophyte Klebsiella pneumoniae 342 and virulence predictions verified in mice.</title>
        <authorList>
            <person name="Fouts D.E."/>
            <person name="Tyler H.L."/>
            <person name="DeBoy R.T."/>
            <person name="Daugherty S."/>
            <person name="Ren Q."/>
            <person name="Badger J.H."/>
            <person name="Durkin A.S."/>
            <person name="Huot H."/>
            <person name="Shrivastava S."/>
            <person name="Kothari S."/>
            <person name="Dodson R.J."/>
            <person name="Mohamoud Y."/>
            <person name="Khouri H."/>
            <person name="Roesch L.F.W."/>
            <person name="Krogfelt K.A."/>
            <person name="Struve C."/>
            <person name="Triplett E.W."/>
            <person name="Methe B.A."/>
        </authorList>
    </citation>
    <scope>NUCLEOTIDE SEQUENCE [LARGE SCALE GENOMIC DNA]</scope>
    <source>
        <strain>342</strain>
    </source>
</reference>
<name>GLPE_KLEP3</name>
<feature type="chain" id="PRO_1000190100" description="Thiosulfate sulfurtransferase GlpE">
    <location>
        <begin position="1"/>
        <end position="109"/>
    </location>
</feature>
<feature type="domain" description="Rhodanese" evidence="1">
    <location>
        <begin position="17"/>
        <end position="105"/>
    </location>
</feature>
<feature type="active site" description="Cysteine persulfide intermediate" evidence="1">
    <location>
        <position position="65"/>
    </location>
</feature>
<organism>
    <name type="scientific">Klebsiella pneumoniae (strain 342)</name>
    <dbReference type="NCBI Taxonomy" id="507522"/>
    <lineage>
        <taxon>Bacteria</taxon>
        <taxon>Pseudomonadati</taxon>
        <taxon>Pseudomonadota</taxon>
        <taxon>Gammaproteobacteria</taxon>
        <taxon>Enterobacterales</taxon>
        <taxon>Enterobacteriaceae</taxon>
        <taxon>Klebsiella/Raoultella group</taxon>
        <taxon>Klebsiella</taxon>
        <taxon>Klebsiella pneumoniae complex</taxon>
    </lineage>
</organism>